<evidence type="ECO:0000255" key="1">
    <source>
        <dbReference type="HAMAP-Rule" id="MF_00384"/>
    </source>
</evidence>
<proteinExistence type="inferred from homology"/>
<organism>
    <name type="scientific">Shigella sonnei (strain Ss046)</name>
    <dbReference type="NCBI Taxonomy" id="300269"/>
    <lineage>
        <taxon>Bacteria</taxon>
        <taxon>Pseudomonadati</taxon>
        <taxon>Pseudomonadota</taxon>
        <taxon>Gammaproteobacteria</taxon>
        <taxon>Enterobacterales</taxon>
        <taxon>Enterobacteriaceae</taxon>
        <taxon>Shigella</taxon>
    </lineage>
</organism>
<comment type="function">
    <text evidence="1">Catalyzes the ATP-dependent phosphorylation of L-homoserine to L-homoserine phosphate.</text>
</comment>
<comment type="catalytic activity">
    <reaction evidence="1">
        <text>L-homoserine + ATP = O-phospho-L-homoserine + ADP + H(+)</text>
        <dbReference type="Rhea" id="RHEA:13985"/>
        <dbReference type="ChEBI" id="CHEBI:15378"/>
        <dbReference type="ChEBI" id="CHEBI:30616"/>
        <dbReference type="ChEBI" id="CHEBI:57476"/>
        <dbReference type="ChEBI" id="CHEBI:57590"/>
        <dbReference type="ChEBI" id="CHEBI:456216"/>
        <dbReference type="EC" id="2.7.1.39"/>
    </reaction>
</comment>
<comment type="pathway">
    <text evidence="1">Amino-acid biosynthesis; L-threonine biosynthesis; L-threonine from L-aspartate: step 4/5.</text>
</comment>
<comment type="subcellular location">
    <subcellularLocation>
        <location evidence="1">Cytoplasm</location>
    </subcellularLocation>
</comment>
<comment type="similarity">
    <text evidence="1">Belongs to the GHMP kinase family. Homoserine kinase subfamily.</text>
</comment>
<protein>
    <recommendedName>
        <fullName evidence="1">Homoserine kinase</fullName>
        <shortName evidence="1">HK</shortName>
        <shortName evidence="1">HSK</shortName>
        <ecNumber evidence="1">2.7.1.39</ecNumber>
    </recommendedName>
</protein>
<accession>Q3Z611</accession>
<keyword id="KW-0028">Amino-acid biosynthesis</keyword>
<keyword id="KW-0067">ATP-binding</keyword>
<keyword id="KW-0963">Cytoplasm</keyword>
<keyword id="KW-0418">Kinase</keyword>
<keyword id="KW-0547">Nucleotide-binding</keyword>
<keyword id="KW-1185">Reference proteome</keyword>
<keyword id="KW-0791">Threonine biosynthesis</keyword>
<keyword id="KW-0808">Transferase</keyword>
<reference key="1">
    <citation type="journal article" date="2005" name="Nucleic Acids Res.">
        <title>Genome dynamics and diversity of Shigella species, the etiologic agents of bacillary dysentery.</title>
        <authorList>
            <person name="Yang F."/>
            <person name="Yang J."/>
            <person name="Zhang X."/>
            <person name="Chen L."/>
            <person name="Jiang Y."/>
            <person name="Yan Y."/>
            <person name="Tang X."/>
            <person name="Wang J."/>
            <person name="Xiong Z."/>
            <person name="Dong J."/>
            <person name="Xue Y."/>
            <person name="Zhu Y."/>
            <person name="Xu X."/>
            <person name="Sun L."/>
            <person name="Chen S."/>
            <person name="Nie H."/>
            <person name="Peng J."/>
            <person name="Xu J."/>
            <person name="Wang Y."/>
            <person name="Yuan Z."/>
            <person name="Wen Y."/>
            <person name="Yao Z."/>
            <person name="Shen Y."/>
            <person name="Qiang B."/>
            <person name="Hou Y."/>
            <person name="Yu J."/>
            <person name="Jin Q."/>
        </authorList>
    </citation>
    <scope>NUCLEOTIDE SEQUENCE [LARGE SCALE GENOMIC DNA]</scope>
    <source>
        <strain>Ss046</strain>
    </source>
</reference>
<name>KHSE_SHISS</name>
<dbReference type="EC" id="2.7.1.39" evidence="1"/>
<dbReference type="EMBL" id="CP000038">
    <property type="protein sequence ID" value="AAZ86801.1"/>
    <property type="molecule type" value="Genomic_DNA"/>
</dbReference>
<dbReference type="RefSeq" id="WP_000241650.1">
    <property type="nucleotide sequence ID" value="NC_007384.1"/>
</dbReference>
<dbReference type="SMR" id="Q3Z611"/>
<dbReference type="GeneID" id="93777439"/>
<dbReference type="KEGG" id="ssn:SSON_0003"/>
<dbReference type="HOGENOM" id="CLU_041243_1_1_6"/>
<dbReference type="UniPathway" id="UPA00050">
    <property type="reaction ID" value="UER00064"/>
</dbReference>
<dbReference type="Proteomes" id="UP000002529">
    <property type="component" value="Chromosome"/>
</dbReference>
<dbReference type="GO" id="GO:0005737">
    <property type="term" value="C:cytoplasm"/>
    <property type="evidence" value="ECO:0007669"/>
    <property type="project" value="UniProtKB-SubCell"/>
</dbReference>
<dbReference type="GO" id="GO:0005524">
    <property type="term" value="F:ATP binding"/>
    <property type="evidence" value="ECO:0007669"/>
    <property type="project" value="UniProtKB-UniRule"/>
</dbReference>
<dbReference type="GO" id="GO:0004413">
    <property type="term" value="F:homoserine kinase activity"/>
    <property type="evidence" value="ECO:0007669"/>
    <property type="project" value="UniProtKB-UniRule"/>
</dbReference>
<dbReference type="GO" id="GO:0009088">
    <property type="term" value="P:threonine biosynthetic process"/>
    <property type="evidence" value="ECO:0007669"/>
    <property type="project" value="UniProtKB-UniRule"/>
</dbReference>
<dbReference type="FunFam" id="3.30.230.10:FF:000020">
    <property type="entry name" value="Homoserine kinase"/>
    <property type="match status" value="1"/>
</dbReference>
<dbReference type="FunFam" id="3.30.70.890:FF:000002">
    <property type="entry name" value="Homoserine kinase"/>
    <property type="match status" value="1"/>
</dbReference>
<dbReference type="Gene3D" id="3.30.230.10">
    <property type="match status" value="1"/>
</dbReference>
<dbReference type="Gene3D" id="3.30.70.890">
    <property type="entry name" value="GHMP kinase, C-terminal domain"/>
    <property type="match status" value="1"/>
</dbReference>
<dbReference type="HAMAP" id="MF_00384">
    <property type="entry name" value="Homoser_kinase"/>
    <property type="match status" value="1"/>
</dbReference>
<dbReference type="InterPro" id="IPR013750">
    <property type="entry name" value="GHMP_kinase_C_dom"/>
</dbReference>
<dbReference type="InterPro" id="IPR036554">
    <property type="entry name" value="GHMP_kinase_C_sf"/>
</dbReference>
<dbReference type="InterPro" id="IPR006204">
    <property type="entry name" value="GHMP_kinase_N_dom"/>
</dbReference>
<dbReference type="InterPro" id="IPR006203">
    <property type="entry name" value="GHMP_knse_ATP-bd_CS"/>
</dbReference>
<dbReference type="InterPro" id="IPR000870">
    <property type="entry name" value="Homoserine_kinase"/>
</dbReference>
<dbReference type="InterPro" id="IPR020568">
    <property type="entry name" value="Ribosomal_Su5_D2-typ_SF"/>
</dbReference>
<dbReference type="InterPro" id="IPR014721">
    <property type="entry name" value="Ribsml_uS5_D2-typ_fold_subgr"/>
</dbReference>
<dbReference type="NCBIfam" id="NF002288">
    <property type="entry name" value="PRK01212.1-4"/>
    <property type="match status" value="1"/>
</dbReference>
<dbReference type="NCBIfam" id="TIGR00191">
    <property type="entry name" value="thrB"/>
    <property type="match status" value="1"/>
</dbReference>
<dbReference type="PANTHER" id="PTHR20861:SF1">
    <property type="entry name" value="HOMOSERINE KINASE"/>
    <property type="match status" value="1"/>
</dbReference>
<dbReference type="PANTHER" id="PTHR20861">
    <property type="entry name" value="HOMOSERINE/4-DIPHOSPHOCYTIDYL-2-C-METHYL-D-ERYTHRITOL KINASE"/>
    <property type="match status" value="1"/>
</dbReference>
<dbReference type="Pfam" id="PF08544">
    <property type="entry name" value="GHMP_kinases_C"/>
    <property type="match status" value="1"/>
</dbReference>
<dbReference type="Pfam" id="PF00288">
    <property type="entry name" value="GHMP_kinases_N"/>
    <property type="match status" value="1"/>
</dbReference>
<dbReference type="PIRSF" id="PIRSF000676">
    <property type="entry name" value="Homoser_kin"/>
    <property type="match status" value="1"/>
</dbReference>
<dbReference type="PRINTS" id="PR00958">
    <property type="entry name" value="HOMSERKINASE"/>
</dbReference>
<dbReference type="SUPFAM" id="SSF55060">
    <property type="entry name" value="GHMP Kinase, C-terminal domain"/>
    <property type="match status" value="1"/>
</dbReference>
<dbReference type="SUPFAM" id="SSF54211">
    <property type="entry name" value="Ribosomal protein S5 domain 2-like"/>
    <property type="match status" value="1"/>
</dbReference>
<dbReference type="PROSITE" id="PS00627">
    <property type="entry name" value="GHMP_KINASES_ATP"/>
    <property type="match status" value="1"/>
</dbReference>
<gene>
    <name evidence="1" type="primary">thrB</name>
    <name type="ordered locus">SSON_0003</name>
</gene>
<sequence length="310" mass="33595">MVKVYAPASSANMSVGFDVLGAAVTPVDGALLGDVVTVEAAETFSLNNLGRFADKLPSEPRENIVYQCWERFCLELGKQIPVAMTLEKNMPIGSGLGSSACSVVAALMAMNEHCGKPLNDTRLLALMGELEGRISGSIHYDNVAPCFLGGMQLMIEENDIISQQVPGFDEWLWVLAYPGIKVSTAEARAILPAQYRRQDCIAHGRHLAGFIHACYSRQPELAAKLMKDVIAEPYRERLLPGFRQARQAVAEIGAVASGISGSGPTLFALCDKPDTAQRVADWLGKNYLQNQEGFVHICRLDTAGARVLEN</sequence>
<feature type="chain" id="PRO_1000049166" description="Homoserine kinase">
    <location>
        <begin position="1"/>
        <end position="310"/>
    </location>
</feature>
<feature type="binding site" evidence="1">
    <location>
        <begin position="91"/>
        <end position="101"/>
    </location>
    <ligand>
        <name>ATP</name>
        <dbReference type="ChEBI" id="CHEBI:30616"/>
    </ligand>
</feature>